<name>PRVA_MOUSE</name>
<feature type="initiator methionine" description="Removed" evidence="4">
    <location>
        <position position="1"/>
    </location>
</feature>
<feature type="chain" id="PRO_0000073590" description="Parvalbumin alpha">
    <location>
        <begin position="2"/>
        <end position="110"/>
    </location>
</feature>
<feature type="domain" description="EF-hand 1" evidence="3">
    <location>
        <begin position="39"/>
        <end position="74"/>
    </location>
</feature>
<feature type="domain" description="EF-hand 2" evidence="3">
    <location>
        <begin position="78"/>
        <end position="110"/>
    </location>
</feature>
<feature type="binding site" evidence="3">
    <location>
        <position position="52"/>
    </location>
    <ligand>
        <name>Ca(2+)</name>
        <dbReference type="ChEBI" id="CHEBI:29108"/>
        <label>1</label>
    </ligand>
</feature>
<feature type="binding site" evidence="3">
    <location>
        <position position="54"/>
    </location>
    <ligand>
        <name>Ca(2+)</name>
        <dbReference type="ChEBI" id="CHEBI:29108"/>
        <label>1</label>
    </ligand>
</feature>
<feature type="binding site" evidence="3">
    <location>
        <position position="56"/>
    </location>
    <ligand>
        <name>Ca(2+)</name>
        <dbReference type="ChEBI" id="CHEBI:29108"/>
        <label>1</label>
    </ligand>
</feature>
<feature type="binding site" evidence="2">
    <location>
        <position position="58"/>
    </location>
    <ligand>
        <name>Ca(2+)</name>
        <dbReference type="ChEBI" id="CHEBI:29108"/>
        <label>1</label>
    </ligand>
</feature>
<feature type="binding site" evidence="2">
    <location>
        <position position="60"/>
    </location>
    <ligand>
        <name>Ca(2+)</name>
        <dbReference type="ChEBI" id="CHEBI:29108"/>
        <label>1</label>
    </ligand>
</feature>
<feature type="binding site" evidence="3">
    <location>
        <position position="63"/>
    </location>
    <ligand>
        <name>Ca(2+)</name>
        <dbReference type="ChEBI" id="CHEBI:29108"/>
        <label>1</label>
    </ligand>
</feature>
<feature type="binding site" evidence="3">
    <location>
        <position position="91"/>
    </location>
    <ligand>
        <name>Ca(2+)</name>
        <dbReference type="ChEBI" id="CHEBI:29108"/>
        <label>2</label>
    </ligand>
</feature>
<feature type="binding site" evidence="3">
    <location>
        <position position="93"/>
    </location>
    <ligand>
        <name>Ca(2+)</name>
        <dbReference type="ChEBI" id="CHEBI:29108"/>
        <label>2</label>
    </ligand>
</feature>
<feature type="binding site" evidence="3">
    <location>
        <position position="95"/>
    </location>
    <ligand>
        <name>Ca(2+)</name>
        <dbReference type="ChEBI" id="CHEBI:29108"/>
        <label>2</label>
    </ligand>
</feature>
<feature type="binding site" evidence="3">
    <location>
        <position position="97"/>
    </location>
    <ligand>
        <name>Ca(2+)</name>
        <dbReference type="ChEBI" id="CHEBI:29108"/>
        <label>2</label>
    </ligand>
</feature>
<feature type="binding site" evidence="3">
    <location>
        <position position="102"/>
    </location>
    <ligand>
        <name>Ca(2+)</name>
        <dbReference type="ChEBI" id="CHEBI:29108"/>
        <label>2</label>
    </ligand>
</feature>
<feature type="modified residue" description="N-acetylserine" evidence="4">
    <location>
        <position position="2"/>
    </location>
</feature>
<feature type="modified residue" description="Phosphoserine" evidence="2">
    <location>
        <position position="2"/>
    </location>
</feature>
<feature type="modified residue" description="Phosphoserine" evidence="2">
    <location>
        <position position="8"/>
    </location>
</feature>
<feature type="modified residue" description="Phosphoserine" evidence="2">
    <location>
        <position position="24"/>
    </location>
</feature>
<feature type="sequence conflict" description="In Ref. 1; CAA38434 and 2; CAA42025." evidence="6" ref="1 2">
    <original>S</original>
    <variation>T</variation>
    <location>
        <position position="110"/>
    </location>
</feature>
<gene>
    <name type="primary">Pvalb</name>
    <name type="synonym">Pva</name>
</gene>
<accession>P32848</accession>
<comment type="function">
    <text evidence="1 2">In muscle, parvalbumin is thought to be involved in relaxation after contraction (By similarity). It binds two calcium ions (By similarity).</text>
</comment>
<comment type="tissue specificity">
    <text evidence="5">Expressed in the modiolar nerve root (at protein level).</text>
</comment>
<comment type="domain">
    <text evidence="2">AB domain, comprising of helices A and B, is involved in structural stabilization, protecting the hydrophobic core of the protein. It is required for high-affinity binding of Ca(2+) and for Mg(2+)-binding.</text>
</comment>
<comment type="mass spectrometry"/>
<comment type="similarity">
    <text evidence="6">Belongs to the parvalbumin family.</text>
</comment>
<dbReference type="EMBL" id="X54613">
    <property type="protein sequence ID" value="CAA38434.1"/>
    <property type="molecule type" value="mRNA"/>
</dbReference>
<dbReference type="EMBL" id="X59382">
    <property type="protein sequence ID" value="CAA42025.1"/>
    <property type="molecule type" value="mRNA"/>
</dbReference>
<dbReference type="EMBL" id="BC027424">
    <property type="protein sequence ID" value="AAH27424.1"/>
    <property type="molecule type" value="mRNA"/>
</dbReference>
<dbReference type="EMBL" id="S75909">
    <property type="protein sequence ID" value="AAB33066.1"/>
    <property type="molecule type" value="mRNA"/>
</dbReference>
<dbReference type="EMBL" id="S75910">
    <property type="status" value="NOT_ANNOTATED_CDS"/>
    <property type="molecule type" value="mRNA"/>
</dbReference>
<dbReference type="CCDS" id="CCDS27609.1"/>
<dbReference type="PIR" id="A37414">
    <property type="entry name" value="A37414"/>
</dbReference>
<dbReference type="PIR" id="I65238">
    <property type="entry name" value="I65238"/>
</dbReference>
<dbReference type="RefSeq" id="NP_001317615.1">
    <property type="nucleotide sequence ID" value="NM_001330686.1"/>
</dbReference>
<dbReference type="RefSeq" id="NP_038673.2">
    <property type="nucleotide sequence ID" value="NM_013645.4"/>
</dbReference>
<dbReference type="SMR" id="P32848"/>
<dbReference type="BioGRID" id="202517">
    <property type="interactions" value="3"/>
</dbReference>
<dbReference type="FunCoup" id="P32848">
    <property type="interactions" value="11"/>
</dbReference>
<dbReference type="STRING" id="10090.ENSMUSP00000005860"/>
<dbReference type="iPTMnet" id="P32848"/>
<dbReference type="PhosphoSitePlus" id="P32848"/>
<dbReference type="SwissPalm" id="P32848"/>
<dbReference type="CPTAC" id="non-CPTAC-3996"/>
<dbReference type="jPOST" id="P32848"/>
<dbReference type="PaxDb" id="10090-ENSMUSP00000112598"/>
<dbReference type="PeptideAtlas" id="P32848"/>
<dbReference type="ProteomicsDB" id="291827"/>
<dbReference type="ABCD" id="P32848">
    <property type="antibodies" value="4 sequenced antibodies"/>
</dbReference>
<dbReference type="Antibodypedia" id="3746">
    <property type="antibodies" value="388 antibodies from 42 providers"/>
</dbReference>
<dbReference type="DNASU" id="19293"/>
<dbReference type="Ensembl" id="ENSMUST00000005860.16">
    <property type="protein sequence ID" value="ENSMUSP00000005860.10"/>
    <property type="gene ID" value="ENSMUSG00000005716.17"/>
</dbReference>
<dbReference type="Ensembl" id="ENSMUST00000120592.2">
    <property type="protein sequence ID" value="ENSMUSP00000112598.2"/>
    <property type="gene ID" value="ENSMUSG00000005716.17"/>
</dbReference>
<dbReference type="GeneID" id="19293"/>
<dbReference type="KEGG" id="mmu:19293"/>
<dbReference type="UCSC" id="uc007wot.2">
    <property type="organism name" value="mouse"/>
</dbReference>
<dbReference type="AGR" id="MGI:97821"/>
<dbReference type="CTD" id="5816"/>
<dbReference type="MGI" id="MGI:97821">
    <property type="gene designation" value="Pvalb"/>
</dbReference>
<dbReference type="VEuPathDB" id="HostDB:ENSMUSG00000005716"/>
<dbReference type="eggNOG" id="KOG0027">
    <property type="taxonomic scope" value="Eukaryota"/>
</dbReference>
<dbReference type="GeneTree" id="ENSGT00940000159653"/>
<dbReference type="HOGENOM" id="CLU_157356_0_0_1"/>
<dbReference type="InParanoid" id="P32848"/>
<dbReference type="OMA" id="HRKFFQM"/>
<dbReference type="OrthoDB" id="26525at2759"/>
<dbReference type="PhylomeDB" id="P32848"/>
<dbReference type="TreeFam" id="TF332342"/>
<dbReference type="BioGRID-ORCS" id="19293">
    <property type="hits" value="2 hits in 78 CRISPR screens"/>
</dbReference>
<dbReference type="ChiTaRS" id="Pvalb">
    <property type="organism name" value="mouse"/>
</dbReference>
<dbReference type="PRO" id="PR:P32848"/>
<dbReference type="Proteomes" id="UP000000589">
    <property type="component" value="Chromosome 15"/>
</dbReference>
<dbReference type="RNAct" id="P32848">
    <property type="molecule type" value="protein"/>
</dbReference>
<dbReference type="Bgee" id="ENSMUSG00000005716">
    <property type="expression patterns" value="Expressed in triceps brachii and 147 other cell types or tissues"/>
</dbReference>
<dbReference type="ExpressionAtlas" id="P32848">
    <property type="expression patterns" value="baseline and differential"/>
</dbReference>
<dbReference type="GO" id="GO:0030424">
    <property type="term" value="C:axon"/>
    <property type="evidence" value="ECO:0000314"/>
    <property type="project" value="MGI"/>
</dbReference>
<dbReference type="GO" id="GO:0005737">
    <property type="term" value="C:cytoplasm"/>
    <property type="evidence" value="ECO:0000314"/>
    <property type="project" value="MGI"/>
</dbReference>
<dbReference type="GO" id="GO:0005829">
    <property type="term" value="C:cytosol"/>
    <property type="evidence" value="ECO:0000304"/>
    <property type="project" value="Reactome"/>
</dbReference>
<dbReference type="GO" id="GO:0045202">
    <property type="term" value="C:synapse"/>
    <property type="evidence" value="ECO:0007669"/>
    <property type="project" value="GOC"/>
</dbReference>
<dbReference type="GO" id="GO:0005509">
    <property type="term" value="F:calcium ion binding"/>
    <property type="evidence" value="ECO:0007669"/>
    <property type="project" value="InterPro"/>
</dbReference>
<dbReference type="GO" id="GO:0098976">
    <property type="term" value="P:excitatory chemical synaptic transmission"/>
    <property type="evidence" value="ECO:0000315"/>
    <property type="project" value="MGI"/>
</dbReference>
<dbReference type="GO" id="GO:0010467">
    <property type="term" value="P:gene expression"/>
    <property type="evidence" value="ECO:0000315"/>
    <property type="project" value="MGI"/>
</dbReference>
<dbReference type="GO" id="GO:0098977">
    <property type="term" value="P:inhibitory chemical synaptic transmission"/>
    <property type="evidence" value="ECO:0000315"/>
    <property type="project" value="MGI"/>
</dbReference>
<dbReference type="CDD" id="cd16254">
    <property type="entry name" value="EFh_parvalbumin_alpha"/>
    <property type="match status" value="1"/>
</dbReference>
<dbReference type="FunFam" id="1.10.238.10:FF:000060">
    <property type="entry name" value="Parvalbumin, thymic"/>
    <property type="match status" value="1"/>
</dbReference>
<dbReference type="Gene3D" id="1.10.238.10">
    <property type="entry name" value="EF-hand"/>
    <property type="match status" value="1"/>
</dbReference>
<dbReference type="InterPro" id="IPR011992">
    <property type="entry name" value="EF-hand-dom_pair"/>
</dbReference>
<dbReference type="InterPro" id="IPR018247">
    <property type="entry name" value="EF_Hand_1_Ca_BS"/>
</dbReference>
<dbReference type="InterPro" id="IPR002048">
    <property type="entry name" value="EF_hand_dom"/>
</dbReference>
<dbReference type="InterPro" id="IPR008080">
    <property type="entry name" value="Parvalbumin"/>
</dbReference>
<dbReference type="PANTHER" id="PTHR11653">
    <property type="entry name" value="PARVALBUMIN ALPHA"/>
    <property type="match status" value="1"/>
</dbReference>
<dbReference type="PANTHER" id="PTHR11653:SF2">
    <property type="entry name" value="PARVALBUMIN ALPHA"/>
    <property type="match status" value="1"/>
</dbReference>
<dbReference type="Pfam" id="PF13499">
    <property type="entry name" value="EF-hand_7"/>
    <property type="match status" value="1"/>
</dbReference>
<dbReference type="PRINTS" id="PR01697">
    <property type="entry name" value="PARVALBUMIN"/>
</dbReference>
<dbReference type="SMART" id="SM00054">
    <property type="entry name" value="EFh"/>
    <property type="match status" value="2"/>
</dbReference>
<dbReference type="SUPFAM" id="SSF47473">
    <property type="entry name" value="EF-hand"/>
    <property type="match status" value="1"/>
</dbReference>
<dbReference type="PROSITE" id="PS00018">
    <property type="entry name" value="EF_HAND_1"/>
    <property type="match status" value="2"/>
</dbReference>
<dbReference type="PROSITE" id="PS50222">
    <property type="entry name" value="EF_HAND_2"/>
    <property type="match status" value="2"/>
</dbReference>
<organism>
    <name type="scientific">Mus musculus</name>
    <name type="common">Mouse</name>
    <dbReference type="NCBI Taxonomy" id="10090"/>
    <lineage>
        <taxon>Eukaryota</taxon>
        <taxon>Metazoa</taxon>
        <taxon>Chordata</taxon>
        <taxon>Craniata</taxon>
        <taxon>Vertebrata</taxon>
        <taxon>Euteleostomi</taxon>
        <taxon>Mammalia</taxon>
        <taxon>Eutheria</taxon>
        <taxon>Euarchontoglires</taxon>
        <taxon>Glires</taxon>
        <taxon>Rodentia</taxon>
        <taxon>Myomorpha</taxon>
        <taxon>Muroidea</taxon>
        <taxon>Muridae</taxon>
        <taxon>Murinae</taxon>
        <taxon>Mus</taxon>
        <taxon>Mus</taxon>
    </lineage>
</organism>
<proteinExistence type="evidence at protein level"/>
<protein>
    <recommendedName>
        <fullName>Parvalbumin alpha</fullName>
    </recommendedName>
    <alternativeName>
        <fullName evidence="6">Alpha-parvalbumin</fullName>
        <shortName evidence="6">Alpha-PV</shortName>
    </alternativeName>
</protein>
<evidence type="ECO:0000250" key="1">
    <source>
        <dbReference type="UniProtKB" id="P02624"/>
    </source>
</evidence>
<evidence type="ECO:0000250" key="2">
    <source>
        <dbReference type="UniProtKB" id="P02625"/>
    </source>
</evidence>
<evidence type="ECO:0000255" key="3">
    <source>
        <dbReference type="PROSITE-ProRule" id="PRU00448"/>
    </source>
</evidence>
<evidence type="ECO:0000269" key="4">
    <source>
    </source>
</evidence>
<evidence type="ECO:0000269" key="5">
    <source>
    </source>
</evidence>
<evidence type="ECO:0000305" key="6"/>
<keyword id="KW-0007">Acetylation</keyword>
<keyword id="KW-0106">Calcium</keyword>
<keyword id="KW-0903">Direct protein sequencing</keyword>
<keyword id="KW-0479">Metal-binding</keyword>
<keyword id="KW-0514">Muscle protein</keyword>
<keyword id="KW-0597">Phosphoprotein</keyword>
<keyword id="KW-1185">Reference proteome</keyword>
<keyword id="KW-0677">Repeat</keyword>
<sequence>MSMTDVLSAEDIKKAIGAFAAADSFDHKKFFQMVGLKKKNPDEVKKVFHILDKDKSGFIEEDELGSILKGFSSDARDLSAKETKTLLAAGDKDGDGKIGVEEFSTLVAES</sequence>
<reference key="1">
    <citation type="journal article" date="1989" name="Genet. Res.">
        <title>cDNA sequence and chromosomal localization of the mouse parvalbumin gene, Pva.</title>
        <authorList>
            <person name="Zuehlke C.H."/>
            <person name="Schoeffl F."/>
            <person name="Jockusch H."/>
            <person name="Simon D."/>
            <person name="Guenet J.-L."/>
        </authorList>
    </citation>
    <scope>NUCLEOTIDE SEQUENCE [MRNA]</scope>
</reference>
<reference key="2">
    <citation type="journal article" date="1994" name="Neuromuscul. Disord.">
        <title>Subtractive cDNA cloning as a tool to analyse secondary effects of a muscle disease. Characterization of affected genes in the myotonic ADR mouse.</title>
        <authorList>
            <person name="Schleef M."/>
            <person name="Zuehlke C."/>
            <person name="Schoeffl F."/>
            <person name="Jockusch H."/>
        </authorList>
    </citation>
    <scope>NUCLEOTIDE SEQUENCE [MRNA]</scope>
    <source>
        <strain>A2G</strain>
        <tissue>Fast-twitch skeletal muscle</tissue>
    </source>
</reference>
<reference key="3">
    <citation type="journal article" date="2004" name="Genome Res.">
        <title>The status, quality, and expansion of the NIH full-length cDNA project: the Mammalian Gene Collection (MGC).</title>
        <authorList>
            <consortium name="The MGC Project Team"/>
        </authorList>
    </citation>
    <scope>NUCLEOTIDE SEQUENCE [LARGE SCALE MRNA]</scope>
    <source>
        <strain>FVB/N</strain>
        <tissue>Salivary gland</tissue>
    </source>
</reference>
<reference key="4">
    <citation type="journal article" date="1994" name="Biochem. Cell Biol.">
        <title>Characterization of parvalbumin cDNA clones and gene expression in normal and dystrophic mice of strain 129 ReJ.</title>
        <authorList>
            <person name="Chatterjee A."/>
            <person name="Butler A.M."/>
            <person name="Blum M."/>
            <person name="Warner A.H."/>
        </authorList>
    </citation>
    <scope>NUCLEOTIDE SEQUENCE [MRNA] OF 1-103</scope>
</reference>
<reference key="5">
    <citation type="journal article" date="1999" name="Anal. Biochem.">
        <title>Electrospray ionization mass spectrometry: analysis of the Ca2+-binding properties of human recombinant alpha-parvalbumin and nine mutant proteins.</title>
        <authorList>
            <person name="Troxler H."/>
            <person name="Kuster T."/>
            <person name="Rhyner J.A."/>
            <person name="Gehrig P."/>
            <person name="Heizmann C.W."/>
        </authorList>
    </citation>
    <scope>SEQUENCE REVISION TO 110</scope>
    <scope>ACETYLATION AT SER-2</scope>
    <scope>MASS SPECTROMETRY</scope>
    <source>
        <tissue>Skeletal muscle</tissue>
    </source>
</reference>
<reference key="6">
    <citation type="submission" date="1998-09" db="UniProtKB">
        <authorList>
            <person name="Vilbois F."/>
        </authorList>
    </citation>
    <scope>PARTIAL PROTEIN SEQUENCE</scope>
    <scope>ACETYLATION</scope>
    <scope>IDENTIFICATION BY MASS SPECTROMETRY</scope>
</reference>
<reference key="7">
    <citation type="journal article" date="2008" name="Mol. Cell. Neurosci.">
        <title>Math5 expression and function in the central auditory system.</title>
        <authorList>
            <person name="Saul S.M."/>
            <person name="Brzezinski J.A. IV"/>
            <person name="Altschuler R.A."/>
            <person name="Shore S.E."/>
            <person name="Rudolph D.D."/>
            <person name="Kabara L.L."/>
            <person name="Halsey K.E."/>
            <person name="Hufnagel R.B."/>
            <person name="Zhou J."/>
            <person name="Dolan D.F."/>
            <person name="Glaser T."/>
        </authorList>
    </citation>
    <scope>TISSUE SPECIFICITY</scope>
</reference>
<reference key="8">
    <citation type="journal article" date="2010" name="Cell">
        <title>A tissue-specific atlas of mouse protein phosphorylation and expression.</title>
        <authorList>
            <person name="Huttlin E.L."/>
            <person name="Jedrychowski M.P."/>
            <person name="Elias J.E."/>
            <person name="Goswami T."/>
            <person name="Rad R."/>
            <person name="Beausoleil S.A."/>
            <person name="Villen J."/>
            <person name="Haas W."/>
            <person name="Sowa M.E."/>
            <person name="Gygi S.P."/>
        </authorList>
    </citation>
    <scope>IDENTIFICATION BY MASS SPECTROMETRY [LARGE SCALE ANALYSIS]</scope>
    <source>
        <tissue>Brain</tissue>
        <tissue>Brown adipose tissue</tissue>
        <tissue>Kidney</tissue>
        <tissue>Lung</tissue>
    </source>
</reference>